<reference key="1">
    <citation type="journal article" date="2006" name="J. Bacteriol.">
        <title>Complete genome sequence of Yersinia pestis strains Antiqua and Nepal516: evidence of gene reduction in an emerging pathogen.</title>
        <authorList>
            <person name="Chain P.S.G."/>
            <person name="Hu P."/>
            <person name="Malfatti S.A."/>
            <person name="Radnedge L."/>
            <person name="Larimer F."/>
            <person name="Vergez L.M."/>
            <person name="Worsham P."/>
            <person name="Chu M.C."/>
            <person name="Andersen G.L."/>
        </authorList>
    </citation>
    <scope>NUCLEOTIDE SEQUENCE [LARGE SCALE GENOMIC DNA]</scope>
    <source>
        <strain>Antiqua</strain>
    </source>
</reference>
<protein>
    <recommendedName>
        <fullName evidence="1">GTPase Der</fullName>
    </recommendedName>
    <alternativeName>
        <fullName evidence="1">GTP-binding protein EngA</fullName>
    </alternativeName>
</protein>
<name>DER_YERPA</name>
<gene>
    <name evidence="1" type="primary">der</name>
    <name type="synonym">engA</name>
    <name type="ordered locus">YPA_2315</name>
</gene>
<dbReference type="EMBL" id="CP000308">
    <property type="protein sequence ID" value="ABG14280.1"/>
    <property type="molecule type" value="Genomic_DNA"/>
</dbReference>
<dbReference type="RefSeq" id="WP_002209813.1">
    <property type="nucleotide sequence ID" value="NZ_CP009906.1"/>
</dbReference>
<dbReference type="SMR" id="Q1C5J2"/>
<dbReference type="GeneID" id="57975832"/>
<dbReference type="KEGG" id="ypa:YPA_2315"/>
<dbReference type="Proteomes" id="UP000001971">
    <property type="component" value="Chromosome"/>
</dbReference>
<dbReference type="GO" id="GO:0005525">
    <property type="term" value="F:GTP binding"/>
    <property type="evidence" value="ECO:0007669"/>
    <property type="project" value="UniProtKB-UniRule"/>
</dbReference>
<dbReference type="GO" id="GO:0043022">
    <property type="term" value="F:ribosome binding"/>
    <property type="evidence" value="ECO:0007669"/>
    <property type="project" value="TreeGrafter"/>
</dbReference>
<dbReference type="GO" id="GO:0042254">
    <property type="term" value="P:ribosome biogenesis"/>
    <property type="evidence" value="ECO:0007669"/>
    <property type="project" value="UniProtKB-KW"/>
</dbReference>
<dbReference type="CDD" id="cd01894">
    <property type="entry name" value="EngA1"/>
    <property type="match status" value="1"/>
</dbReference>
<dbReference type="CDD" id="cd01895">
    <property type="entry name" value="EngA2"/>
    <property type="match status" value="1"/>
</dbReference>
<dbReference type="FunFam" id="3.30.300.20:FF:000004">
    <property type="entry name" value="GTPase Der"/>
    <property type="match status" value="1"/>
</dbReference>
<dbReference type="FunFam" id="3.40.50.300:FF:000040">
    <property type="entry name" value="GTPase Der"/>
    <property type="match status" value="1"/>
</dbReference>
<dbReference type="FunFam" id="3.40.50.300:FF:000057">
    <property type="entry name" value="GTPase Der"/>
    <property type="match status" value="1"/>
</dbReference>
<dbReference type="Gene3D" id="3.30.300.20">
    <property type="match status" value="1"/>
</dbReference>
<dbReference type="Gene3D" id="3.40.50.300">
    <property type="entry name" value="P-loop containing nucleotide triphosphate hydrolases"/>
    <property type="match status" value="2"/>
</dbReference>
<dbReference type="HAMAP" id="MF_00195">
    <property type="entry name" value="GTPase_Der"/>
    <property type="match status" value="1"/>
</dbReference>
<dbReference type="InterPro" id="IPR031166">
    <property type="entry name" value="G_ENGA"/>
</dbReference>
<dbReference type="InterPro" id="IPR006073">
    <property type="entry name" value="GTP-bd"/>
</dbReference>
<dbReference type="InterPro" id="IPR016484">
    <property type="entry name" value="GTPase_Der"/>
</dbReference>
<dbReference type="InterPro" id="IPR032859">
    <property type="entry name" value="KH_dom-like"/>
</dbReference>
<dbReference type="InterPro" id="IPR015946">
    <property type="entry name" value="KH_dom-like_a/b"/>
</dbReference>
<dbReference type="InterPro" id="IPR027417">
    <property type="entry name" value="P-loop_NTPase"/>
</dbReference>
<dbReference type="InterPro" id="IPR005225">
    <property type="entry name" value="Small_GTP-bd"/>
</dbReference>
<dbReference type="NCBIfam" id="TIGR03594">
    <property type="entry name" value="GTPase_EngA"/>
    <property type="match status" value="1"/>
</dbReference>
<dbReference type="NCBIfam" id="TIGR00231">
    <property type="entry name" value="small_GTP"/>
    <property type="match status" value="2"/>
</dbReference>
<dbReference type="PANTHER" id="PTHR43834">
    <property type="entry name" value="GTPASE DER"/>
    <property type="match status" value="1"/>
</dbReference>
<dbReference type="PANTHER" id="PTHR43834:SF6">
    <property type="entry name" value="GTPASE DER"/>
    <property type="match status" value="1"/>
</dbReference>
<dbReference type="Pfam" id="PF14714">
    <property type="entry name" value="KH_dom-like"/>
    <property type="match status" value="1"/>
</dbReference>
<dbReference type="Pfam" id="PF01926">
    <property type="entry name" value="MMR_HSR1"/>
    <property type="match status" value="2"/>
</dbReference>
<dbReference type="PIRSF" id="PIRSF006485">
    <property type="entry name" value="GTP-binding_EngA"/>
    <property type="match status" value="1"/>
</dbReference>
<dbReference type="PRINTS" id="PR00326">
    <property type="entry name" value="GTP1OBG"/>
</dbReference>
<dbReference type="SUPFAM" id="SSF52540">
    <property type="entry name" value="P-loop containing nucleoside triphosphate hydrolases"/>
    <property type="match status" value="2"/>
</dbReference>
<dbReference type="PROSITE" id="PS51712">
    <property type="entry name" value="G_ENGA"/>
    <property type="match status" value="2"/>
</dbReference>
<comment type="function">
    <text evidence="1">GTPase that plays an essential role in the late steps of ribosome biogenesis.</text>
</comment>
<comment type="subunit">
    <text evidence="1">Associates with the 50S ribosomal subunit.</text>
</comment>
<comment type="similarity">
    <text evidence="1">Belongs to the TRAFAC class TrmE-Era-EngA-EngB-Septin-like GTPase superfamily. EngA (Der) GTPase family.</text>
</comment>
<evidence type="ECO:0000255" key="1">
    <source>
        <dbReference type="HAMAP-Rule" id="MF_00195"/>
    </source>
</evidence>
<keyword id="KW-0342">GTP-binding</keyword>
<keyword id="KW-0547">Nucleotide-binding</keyword>
<keyword id="KW-0677">Repeat</keyword>
<keyword id="KW-0690">Ribosome biogenesis</keyword>
<accession>Q1C5J2</accession>
<proteinExistence type="inferred from homology"/>
<feature type="chain" id="PRO_1000011786" description="GTPase Der">
    <location>
        <begin position="1"/>
        <end position="495"/>
    </location>
</feature>
<feature type="domain" description="EngA-type G 1">
    <location>
        <begin position="3"/>
        <end position="166"/>
    </location>
</feature>
<feature type="domain" description="EngA-type G 2">
    <location>
        <begin position="208"/>
        <end position="381"/>
    </location>
</feature>
<feature type="domain" description="KH-like" evidence="1">
    <location>
        <begin position="382"/>
        <end position="466"/>
    </location>
</feature>
<feature type="binding site" evidence="1">
    <location>
        <begin position="9"/>
        <end position="16"/>
    </location>
    <ligand>
        <name>GTP</name>
        <dbReference type="ChEBI" id="CHEBI:37565"/>
        <label>1</label>
    </ligand>
</feature>
<feature type="binding site" evidence="1">
    <location>
        <begin position="56"/>
        <end position="60"/>
    </location>
    <ligand>
        <name>GTP</name>
        <dbReference type="ChEBI" id="CHEBI:37565"/>
        <label>1</label>
    </ligand>
</feature>
<feature type="binding site" evidence="1">
    <location>
        <begin position="118"/>
        <end position="121"/>
    </location>
    <ligand>
        <name>GTP</name>
        <dbReference type="ChEBI" id="CHEBI:37565"/>
        <label>1</label>
    </ligand>
</feature>
<feature type="binding site" evidence="1">
    <location>
        <begin position="214"/>
        <end position="221"/>
    </location>
    <ligand>
        <name>GTP</name>
        <dbReference type="ChEBI" id="CHEBI:37565"/>
        <label>2</label>
    </ligand>
</feature>
<feature type="binding site" evidence="1">
    <location>
        <begin position="261"/>
        <end position="265"/>
    </location>
    <ligand>
        <name>GTP</name>
        <dbReference type="ChEBI" id="CHEBI:37565"/>
        <label>2</label>
    </ligand>
</feature>
<feature type="binding site" evidence="1">
    <location>
        <begin position="326"/>
        <end position="329"/>
    </location>
    <ligand>
        <name>GTP</name>
        <dbReference type="ChEBI" id="CHEBI:37565"/>
        <label>2</label>
    </ligand>
</feature>
<sequence>MIPVIALVGRPNVGKSTLFNRLTHTRDALVADFPGLTRDRKYGRAEVEGHEFIVVDTGGIDGTEDGVETKMAGQSLLAIEEADIVLFMVDARAGLMPADQGIAQHLRSREKATFLVANKTDGIDPDTATADFYSLGLGEVHAIAASHGRGVTQLIEDVMAPYMDAEEPEVELTEEEENAAYWAEQEAQGEDVPPEDPEDDFDPRTLPIKLAIVGRPNVGKSTLTNRILGEDRVVVYDMPGTTRDSIYIPMTRDDREYILIDTAGVRKRGKITETVEKFSVIKTLQAIEDSNVVLLVIDARDGISDQDLSLLGFILNSGRSLVIAVNKWDGMTEEARAQVKDMLDLRLGFVDFARIHFISALHGSGVGNLFESVQEAYDCSTKRVGTSLLTRIMQMAEEDHQPPLVRGRRVKLKYAHAGGYNPPIVVIHGNQVTDLSDSYKRYLMNYFRRSLKVMGTPIRIQFKEGENPFAGKRNPLTPNQMRKRKRLMSHLKKGK</sequence>
<organism>
    <name type="scientific">Yersinia pestis bv. Antiqua (strain Antiqua)</name>
    <dbReference type="NCBI Taxonomy" id="360102"/>
    <lineage>
        <taxon>Bacteria</taxon>
        <taxon>Pseudomonadati</taxon>
        <taxon>Pseudomonadota</taxon>
        <taxon>Gammaproteobacteria</taxon>
        <taxon>Enterobacterales</taxon>
        <taxon>Yersiniaceae</taxon>
        <taxon>Yersinia</taxon>
    </lineage>
</organism>